<dbReference type="EC" id="1.-.-.-" evidence="7"/>
<dbReference type="EMBL" id="ACYE01000098">
    <property type="protein sequence ID" value="EFE43382.1"/>
    <property type="molecule type" value="Genomic_DNA"/>
</dbReference>
<dbReference type="RefSeq" id="XP_003024000.1">
    <property type="nucleotide sequence ID" value="XM_003023954.1"/>
</dbReference>
<dbReference type="SMR" id="D4D448"/>
<dbReference type="GlyCosmos" id="D4D448">
    <property type="glycosylation" value="4 sites, No reported glycans"/>
</dbReference>
<dbReference type="GeneID" id="9582693"/>
<dbReference type="KEGG" id="tve:TRV_01862"/>
<dbReference type="HOGENOM" id="CLU_018354_4_4_1"/>
<dbReference type="OrthoDB" id="4271at34384"/>
<dbReference type="UniPathway" id="UPA00327"/>
<dbReference type="Proteomes" id="UP000008383">
    <property type="component" value="Unassembled WGS sequence"/>
</dbReference>
<dbReference type="GO" id="GO:0071949">
    <property type="term" value="F:FAD binding"/>
    <property type="evidence" value="ECO:0007669"/>
    <property type="project" value="InterPro"/>
</dbReference>
<dbReference type="GO" id="GO:0016491">
    <property type="term" value="F:oxidoreductase activity"/>
    <property type="evidence" value="ECO:0007669"/>
    <property type="project" value="UniProtKB-KW"/>
</dbReference>
<dbReference type="GO" id="GO:0035835">
    <property type="term" value="P:indole alkaloid biosynthetic process"/>
    <property type="evidence" value="ECO:0007669"/>
    <property type="project" value="UniProtKB-UniPathway"/>
</dbReference>
<dbReference type="Gene3D" id="3.30.465.10">
    <property type="match status" value="2"/>
</dbReference>
<dbReference type="InterPro" id="IPR012951">
    <property type="entry name" value="BBE"/>
</dbReference>
<dbReference type="InterPro" id="IPR016166">
    <property type="entry name" value="FAD-bd_PCMH"/>
</dbReference>
<dbReference type="InterPro" id="IPR036318">
    <property type="entry name" value="FAD-bd_PCMH-like_sf"/>
</dbReference>
<dbReference type="InterPro" id="IPR016169">
    <property type="entry name" value="FAD-bd_PCMH_sub2"/>
</dbReference>
<dbReference type="InterPro" id="IPR050432">
    <property type="entry name" value="FAD-linked_Oxidoreductases_BP"/>
</dbReference>
<dbReference type="InterPro" id="IPR006094">
    <property type="entry name" value="Oxid_FAD_bind_N"/>
</dbReference>
<dbReference type="PANTHER" id="PTHR13878:SF98">
    <property type="entry name" value="FAD-LINKED OXIDOREDUCTASE ASQF"/>
    <property type="match status" value="1"/>
</dbReference>
<dbReference type="PANTHER" id="PTHR13878">
    <property type="entry name" value="GULONOLACTONE OXIDASE"/>
    <property type="match status" value="1"/>
</dbReference>
<dbReference type="Pfam" id="PF08031">
    <property type="entry name" value="BBE"/>
    <property type="match status" value="1"/>
</dbReference>
<dbReference type="Pfam" id="PF01565">
    <property type="entry name" value="FAD_binding_4"/>
    <property type="match status" value="1"/>
</dbReference>
<dbReference type="SUPFAM" id="SSF56176">
    <property type="entry name" value="FAD-binding/transporter-associated domain-like"/>
    <property type="match status" value="1"/>
</dbReference>
<dbReference type="PROSITE" id="PS51387">
    <property type="entry name" value="FAD_PCMH"/>
    <property type="match status" value="1"/>
</dbReference>
<gene>
    <name evidence="5" type="primary">easE</name>
    <name type="ORF">TRV_01862</name>
</gene>
<accession>D4D448</accession>
<protein>
    <recommendedName>
        <fullName evidence="5">FAD-linked oxidoreductase easE</fullName>
        <ecNumber evidence="7">1.-.-.-</ecNumber>
    </recommendedName>
    <alternativeName>
        <fullName evidence="6">Chanoclavine I synthase</fullName>
    </alternativeName>
    <alternativeName>
        <fullName evidence="5">Ergot alkaloid synthesis protein E</fullName>
    </alternativeName>
</protein>
<name>EASE_TRIVH</name>
<keyword id="KW-0017">Alkaloid metabolism</keyword>
<keyword id="KW-0274">FAD</keyword>
<keyword id="KW-0285">Flavoprotein</keyword>
<keyword id="KW-0325">Glycoprotein</keyword>
<keyword id="KW-0560">Oxidoreductase</keyword>
<keyword id="KW-0732">Signal</keyword>
<sequence>MQFLLWSTGLVALLSWLIYTQETQSASCRCRPWESCWPSEELWNSFNTSVDGKLHRLRPAAHVCYGPSFNRSACDNILLLSRDSGWRASNPGVLQDWVWEAGETANESCPVGSLRTASAVNSCHQGRIPLFTVGVESTKQVQEAVRFARKHKLRLVIRNTGHDLAGRSSAPDSFQIHTHRLQEIQFHADMRLDGSNTSLGPAVTVGAGVMMGDLYAQAARHGYMVLGGDCPTVGVVGGFLQGGGISDFLSLNQGFGVDNVLEYEVVTADGELVVANALQNQDLFWALRGGGGGTFGVVTRATMRVFPDVPVVISEILLEAPQAISSSWTQGLSIVLTALQSLNHDNVGGQLVIAVLPNLAVQASIKFFFLDATEAAVIDRRMKPFLTKLSRANVKYTYSSKNLPHFSSNYRQVPDIHSDNDYGVLGSTVAISQQLFDSPQGPEKVAKALANLPVSAGDLIFTSNLGGRVIRNGELAETSMHPAWRSASQLINYVHTVEPSIEGRAKARERLTNTQMPMLYALDPNIKLSYRNVGDPNEKDFQQIYWGPNYGRLSNIKKKWDTDDLFFSKLGVGSERWDSEESDEVYFFSYFYLEGINTLKVARR</sequence>
<comment type="function">
    <text evidence="4">FAD-linked oxidoreductase; part of the gene cluster that mediates the biosynthesis of fungal ergot alkaloid (PubMed:22403186). DmaW catalyzes the first step of ergot alkaloid biosynthesis by condensing dimethylallyl diphosphate (DMAP) and tryptophan to form 4-dimethylallyl-L-tryptophan (PubMed:22403186). The second step is catalyzed by the methyltransferase easF that methylates 4-dimethylallyl-L-tryptophan in the presence of S-adenosyl-L-methionine, resulting in the formation of 4-dimethylallyl-L-abrine (PubMed:22403186). The catalase easC and the FAD-dependent oxidoreductase easE then transform 4-dimethylallyl-L-abrine to chanoclavine-I which is further oxidized by easD in the presence of NAD(+), resulting in the formation of chanoclavine-I aldehyde (PubMed:22403186). Chanoclavine-I aldehyde is the precursor of ergoamides and ergopeptines in Clavicipitaceae, and clavine-type alcaloids such as fumiclavine in Trichocomaceae (PubMed:22403186). However, the metabolites downstream of chanoclavine-I aldehyde in Arthrodermataceae have not been identified yet (PubMed:22403186).</text>
</comment>
<comment type="cofactor">
    <cofactor evidence="6">
        <name>FAD</name>
        <dbReference type="ChEBI" id="CHEBI:57692"/>
    </cofactor>
</comment>
<comment type="pathway">
    <text evidence="7">Alkaloid biosynthesis; ergot alkaloid biosynthesis.</text>
</comment>
<comment type="similarity">
    <text evidence="6">Belongs to the oxygen-dependent FAD-linked oxidoreductase family.</text>
</comment>
<evidence type="ECO:0000255" key="1"/>
<evidence type="ECO:0000255" key="2">
    <source>
        <dbReference type="PROSITE-ProRule" id="PRU00498"/>
    </source>
</evidence>
<evidence type="ECO:0000255" key="3">
    <source>
        <dbReference type="PROSITE-ProRule" id="PRU00718"/>
    </source>
</evidence>
<evidence type="ECO:0000269" key="4">
    <source>
    </source>
</evidence>
<evidence type="ECO:0000303" key="5">
    <source>
    </source>
</evidence>
<evidence type="ECO:0000305" key="6"/>
<evidence type="ECO:0000305" key="7">
    <source>
    </source>
</evidence>
<organism>
    <name type="scientific">Trichophyton verrucosum (strain HKI 0517)</name>
    <dbReference type="NCBI Taxonomy" id="663202"/>
    <lineage>
        <taxon>Eukaryota</taxon>
        <taxon>Fungi</taxon>
        <taxon>Dikarya</taxon>
        <taxon>Ascomycota</taxon>
        <taxon>Pezizomycotina</taxon>
        <taxon>Eurotiomycetes</taxon>
        <taxon>Eurotiomycetidae</taxon>
        <taxon>Onygenales</taxon>
        <taxon>Arthrodermataceae</taxon>
        <taxon>Trichophyton</taxon>
    </lineage>
</organism>
<proteinExistence type="inferred from homology"/>
<reference key="1">
    <citation type="journal article" date="2011" name="Genome Biol.">
        <title>Comparative and functional genomics provide insights into the pathogenicity of dermatophytic fungi.</title>
        <authorList>
            <person name="Burmester A."/>
            <person name="Shelest E."/>
            <person name="Gloeckner G."/>
            <person name="Heddergott C."/>
            <person name="Schindler S."/>
            <person name="Staib P."/>
            <person name="Heidel A."/>
            <person name="Felder M."/>
            <person name="Petzold A."/>
            <person name="Szafranski K."/>
            <person name="Feuermann M."/>
            <person name="Pedruzzi I."/>
            <person name="Priebe S."/>
            <person name="Groth M."/>
            <person name="Winkler R."/>
            <person name="Li W."/>
            <person name="Kniemeyer O."/>
            <person name="Schroeckh V."/>
            <person name="Hertweck C."/>
            <person name="Hube B."/>
            <person name="White T.C."/>
            <person name="Platzer M."/>
            <person name="Guthke R."/>
            <person name="Heitman J."/>
            <person name="Woestemeyer J."/>
            <person name="Zipfel P.F."/>
            <person name="Monod M."/>
            <person name="Brakhage A.A."/>
        </authorList>
    </citation>
    <scope>NUCLEOTIDE SEQUENCE [LARGE SCALE GENOMIC DNA]</scope>
    <source>
        <strain>HKI 0517</strain>
    </source>
</reference>
<reference key="2">
    <citation type="journal article" date="2012" name="Microbiology">
        <title>Genome mining reveals the presence of a conserved gene cluster for the biosynthesis of ergot alkaloid precursors in the fungal family Arthrodermataceae.</title>
        <authorList>
            <person name="Wallwey C."/>
            <person name="Heddergott C."/>
            <person name="Xie X."/>
            <person name="Brakhage A.A."/>
            <person name="Li S.M."/>
        </authorList>
    </citation>
    <scope>FUNCTION</scope>
</reference>
<feature type="signal peptide" evidence="1">
    <location>
        <begin position="1"/>
        <end position="25"/>
    </location>
</feature>
<feature type="chain" id="PRO_5003055965" description="FAD-linked oxidoreductase easE">
    <location>
        <begin position="26"/>
        <end position="604"/>
    </location>
</feature>
<feature type="domain" description="FAD-binding PCMH-type" evidence="3">
    <location>
        <begin position="125"/>
        <end position="308"/>
    </location>
</feature>
<feature type="glycosylation site" description="N-linked (GlcNAc...) asparagine" evidence="2">
    <location>
        <position position="47"/>
    </location>
</feature>
<feature type="glycosylation site" description="N-linked (GlcNAc...) asparagine" evidence="2">
    <location>
        <position position="70"/>
    </location>
</feature>
<feature type="glycosylation site" description="N-linked (GlcNAc...) asparagine" evidence="2">
    <location>
        <position position="106"/>
    </location>
</feature>
<feature type="glycosylation site" description="N-linked (GlcNAc...) asparagine" evidence="2">
    <location>
        <position position="196"/>
    </location>
</feature>